<dbReference type="EMBL" id="CP000611">
    <property type="protein sequence ID" value="ABQ74699.1"/>
    <property type="molecule type" value="Genomic_DNA"/>
</dbReference>
<dbReference type="RefSeq" id="WP_003414689.1">
    <property type="nucleotide sequence ID" value="NZ_CP016972.1"/>
</dbReference>
<dbReference type="SMR" id="A5U6P9"/>
<dbReference type="KEGG" id="mra:MRA_2919"/>
<dbReference type="eggNOG" id="COG4974">
    <property type="taxonomic scope" value="Bacteria"/>
</dbReference>
<dbReference type="HOGENOM" id="CLU_027562_9_0_11"/>
<dbReference type="Proteomes" id="UP000001988">
    <property type="component" value="Chromosome"/>
</dbReference>
<dbReference type="GO" id="GO:0005737">
    <property type="term" value="C:cytoplasm"/>
    <property type="evidence" value="ECO:0007669"/>
    <property type="project" value="UniProtKB-SubCell"/>
</dbReference>
<dbReference type="GO" id="GO:0003677">
    <property type="term" value="F:DNA binding"/>
    <property type="evidence" value="ECO:0007669"/>
    <property type="project" value="UniProtKB-KW"/>
</dbReference>
<dbReference type="GO" id="GO:0009037">
    <property type="term" value="F:tyrosine-based site-specific recombinase activity"/>
    <property type="evidence" value="ECO:0007669"/>
    <property type="project" value="UniProtKB-UniRule"/>
</dbReference>
<dbReference type="GO" id="GO:0051301">
    <property type="term" value="P:cell division"/>
    <property type="evidence" value="ECO:0007669"/>
    <property type="project" value="UniProtKB-KW"/>
</dbReference>
<dbReference type="GO" id="GO:0007059">
    <property type="term" value="P:chromosome segregation"/>
    <property type="evidence" value="ECO:0007669"/>
    <property type="project" value="UniProtKB-UniRule"/>
</dbReference>
<dbReference type="GO" id="GO:0006313">
    <property type="term" value="P:DNA transposition"/>
    <property type="evidence" value="ECO:0007669"/>
    <property type="project" value="UniProtKB-UniRule"/>
</dbReference>
<dbReference type="CDD" id="cd00798">
    <property type="entry name" value="INT_XerDC_C"/>
    <property type="match status" value="1"/>
</dbReference>
<dbReference type="FunFam" id="1.10.443.10:FF:000007">
    <property type="entry name" value="Tyrosine recombinase XerC"/>
    <property type="match status" value="1"/>
</dbReference>
<dbReference type="Gene3D" id="1.10.150.130">
    <property type="match status" value="1"/>
</dbReference>
<dbReference type="Gene3D" id="1.10.443.10">
    <property type="entry name" value="Intergrase catalytic core"/>
    <property type="match status" value="1"/>
</dbReference>
<dbReference type="HAMAP" id="MF_01808">
    <property type="entry name" value="Recomb_XerC_XerD"/>
    <property type="match status" value="1"/>
</dbReference>
<dbReference type="InterPro" id="IPR044068">
    <property type="entry name" value="CB"/>
</dbReference>
<dbReference type="InterPro" id="IPR011010">
    <property type="entry name" value="DNA_brk_join_enz"/>
</dbReference>
<dbReference type="InterPro" id="IPR013762">
    <property type="entry name" value="Integrase-like_cat_sf"/>
</dbReference>
<dbReference type="InterPro" id="IPR002104">
    <property type="entry name" value="Integrase_catalytic"/>
</dbReference>
<dbReference type="InterPro" id="IPR010998">
    <property type="entry name" value="Integrase_recombinase_N"/>
</dbReference>
<dbReference type="InterPro" id="IPR004107">
    <property type="entry name" value="Integrase_SAM-like_N"/>
</dbReference>
<dbReference type="InterPro" id="IPR023009">
    <property type="entry name" value="Tyrosine_recombinase_XerC/XerD"/>
</dbReference>
<dbReference type="InterPro" id="IPR050090">
    <property type="entry name" value="Tyrosine_recombinase_XerCD"/>
</dbReference>
<dbReference type="NCBIfam" id="NF001399">
    <property type="entry name" value="PRK00283.1"/>
    <property type="match status" value="1"/>
</dbReference>
<dbReference type="PANTHER" id="PTHR30349">
    <property type="entry name" value="PHAGE INTEGRASE-RELATED"/>
    <property type="match status" value="1"/>
</dbReference>
<dbReference type="PANTHER" id="PTHR30349:SF77">
    <property type="entry name" value="TYROSINE RECOMBINASE XERC"/>
    <property type="match status" value="1"/>
</dbReference>
<dbReference type="Pfam" id="PF02899">
    <property type="entry name" value="Phage_int_SAM_1"/>
    <property type="match status" value="1"/>
</dbReference>
<dbReference type="Pfam" id="PF00589">
    <property type="entry name" value="Phage_integrase"/>
    <property type="match status" value="1"/>
</dbReference>
<dbReference type="SUPFAM" id="SSF56349">
    <property type="entry name" value="DNA breaking-rejoining enzymes"/>
    <property type="match status" value="1"/>
</dbReference>
<dbReference type="PROSITE" id="PS51900">
    <property type="entry name" value="CB"/>
    <property type="match status" value="1"/>
</dbReference>
<dbReference type="PROSITE" id="PS51898">
    <property type="entry name" value="TYR_RECOMBINASE"/>
    <property type="match status" value="1"/>
</dbReference>
<keyword id="KW-0131">Cell cycle</keyword>
<keyword id="KW-0132">Cell division</keyword>
<keyword id="KW-0159">Chromosome partition</keyword>
<keyword id="KW-0963">Cytoplasm</keyword>
<keyword id="KW-0229">DNA integration</keyword>
<keyword id="KW-0233">DNA recombination</keyword>
<keyword id="KW-0238">DNA-binding</keyword>
<keyword id="KW-1185">Reference proteome</keyword>
<reference key="1">
    <citation type="journal article" date="2008" name="PLoS ONE">
        <title>Genetic basis of virulence attenuation revealed by comparative genomic analysis of Mycobacterium tuberculosis strain H37Ra versus H37Rv.</title>
        <authorList>
            <person name="Zheng H."/>
            <person name="Lu L."/>
            <person name="Wang B."/>
            <person name="Pu S."/>
            <person name="Zhang X."/>
            <person name="Zhu G."/>
            <person name="Shi W."/>
            <person name="Zhang L."/>
            <person name="Wang H."/>
            <person name="Wang S."/>
            <person name="Zhao G."/>
            <person name="Zhang Y."/>
        </authorList>
    </citation>
    <scope>NUCLEOTIDE SEQUENCE [LARGE SCALE GENOMIC DNA]</scope>
    <source>
        <strain>ATCC 25177 / H37Ra</strain>
    </source>
</reference>
<organism>
    <name type="scientific">Mycobacterium tuberculosis (strain ATCC 25177 / H37Ra)</name>
    <dbReference type="NCBI Taxonomy" id="419947"/>
    <lineage>
        <taxon>Bacteria</taxon>
        <taxon>Bacillati</taxon>
        <taxon>Actinomycetota</taxon>
        <taxon>Actinomycetes</taxon>
        <taxon>Mycobacteriales</taxon>
        <taxon>Mycobacteriaceae</taxon>
        <taxon>Mycobacterium</taxon>
        <taxon>Mycobacterium tuberculosis complex</taxon>
    </lineage>
</organism>
<sequence length="298" mass="31980">MQAILDEFDEYLALQCGRSVHTRRAYLGDLRSLFAFLADRGSSLDALTLSVLRSWLAATAGAGAARTTLARRTSAVKAFTAWAVRRGLLAGDPAARLQVPKARRTLPAVLRQDQALRAMAAAESGAEQGDPLALRDRLIVELLYATGIRVSELCGLDVDDIDTGHRLVRVLGKGNKQRTVPFGQPAADALHAWLVDGRRALVTAESGHALLLGARGRRLDVRQARTAVHQTVAAVDGAPDMGPHGLRHSAATHLLEGGADLRVVQELLGHSSLATTQLYTHVAVARLRAVHERAHPRA</sequence>
<feature type="chain" id="PRO_1000070017" description="Tyrosine recombinase XerC">
    <location>
        <begin position="1"/>
        <end position="298"/>
    </location>
</feature>
<feature type="domain" description="Core-binding (CB)" evidence="3">
    <location>
        <begin position="1"/>
        <end position="84"/>
    </location>
</feature>
<feature type="domain" description="Tyr recombinase" evidence="2">
    <location>
        <begin position="105"/>
        <end position="292"/>
    </location>
</feature>
<feature type="active site" evidence="1">
    <location>
        <position position="149"/>
    </location>
</feature>
<feature type="active site" evidence="1">
    <location>
        <position position="173"/>
    </location>
</feature>
<feature type="active site" evidence="1">
    <location>
        <position position="244"/>
    </location>
</feature>
<feature type="active site" evidence="1">
    <location>
        <position position="247"/>
    </location>
</feature>
<feature type="active site" evidence="1">
    <location>
        <position position="270"/>
    </location>
</feature>
<feature type="active site" description="O-(3'-phospho-DNA)-tyrosine intermediate" evidence="1">
    <location>
        <position position="279"/>
    </location>
</feature>
<gene>
    <name evidence="1" type="primary">xerC</name>
    <name type="ordered locus">MRA_2919</name>
</gene>
<name>XERC_MYCTA</name>
<accession>A5U6P9</accession>
<proteinExistence type="inferred from homology"/>
<protein>
    <recommendedName>
        <fullName evidence="1">Tyrosine recombinase XerC</fullName>
    </recommendedName>
</protein>
<evidence type="ECO:0000255" key="1">
    <source>
        <dbReference type="HAMAP-Rule" id="MF_01808"/>
    </source>
</evidence>
<evidence type="ECO:0000255" key="2">
    <source>
        <dbReference type="PROSITE-ProRule" id="PRU01246"/>
    </source>
</evidence>
<evidence type="ECO:0000255" key="3">
    <source>
        <dbReference type="PROSITE-ProRule" id="PRU01248"/>
    </source>
</evidence>
<comment type="function">
    <text evidence="1">Site-specific tyrosine recombinase, which acts by catalyzing the cutting and rejoining of the recombining DNA molecules. The XerC-XerD complex is essential to convert dimers of the bacterial chromosome into monomers to permit their segregation at cell division. It also contributes to the segregational stability of plasmids.</text>
</comment>
<comment type="subunit">
    <text evidence="1">Forms a cyclic heterotetrameric complex composed of two molecules of XerC and two molecules of XerD.</text>
</comment>
<comment type="subcellular location">
    <subcellularLocation>
        <location evidence="1">Cytoplasm</location>
    </subcellularLocation>
</comment>
<comment type="similarity">
    <text evidence="1">Belongs to the 'phage' integrase family. XerC subfamily.</text>
</comment>